<protein>
    <recommendedName>
        <fullName evidence="1">Large ribosomal subunit protein eL32</fullName>
    </recommendedName>
    <alternativeName>
        <fullName>60S ribosomal protein L32</fullName>
    </alternativeName>
</protein>
<proteinExistence type="evidence at protein level"/>
<evidence type="ECO:0000305" key="1"/>
<dbReference type="EMBL" id="GG662749">
    <property type="protein sequence ID" value="EAR92420.2"/>
    <property type="status" value="ALT_INIT"/>
    <property type="molecule type" value="Genomic_DNA"/>
</dbReference>
<dbReference type="RefSeq" id="XP_001012665.2">
    <property type="nucleotide sequence ID" value="XM_001012665.3"/>
</dbReference>
<dbReference type="PDB" id="4V8P">
    <property type="method" value="X-ray"/>
    <property type="resolution" value="3.52 A"/>
    <property type="chains" value="BX/CX/EX/GX=1-134"/>
</dbReference>
<dbReference type="PDBsum" id="4V8P"/>
<dbReference type="SMR" id="Q236T0"/>
<dbReference type="FunCoup" id="Q236T0">
    <property type="interactions" value="529"/>
</dbReference>
<dbReference type="IntAct" id="Q236T0">
    <property type="interactions" value="1"/>
</dbReference>
<dbReference type="STRING" id="312017.Q236T0"/>
<dbReference type="EnsemblProtists" id="EAR92420">
    <property type="protein sequence ID" value="EAR92420"/>
    <property type="gene ID" value="TTHERM_00085180"/>
</dbReference>
<dbReference type="GeneID" id="7824273"/>
<dbReference type="KEGG" id="tet:TTHERM_00085180"/>
<dbReference type="eggNOG" id="KOG0878">
    <property type="taxonomic scope" value="Eukaryota"/>
</dbReference>
<dbReference type="HOGENOM" id="CLU_071479_4_1_1"/>
<dbReference type="InParanoid" id="Q236T0"/>
<dbReference type="OMA" id="HPSGYEE"/>
<dbReference type="OrthoDB" id="309450at2759"/>
<dbReference type="Proteomes" id="UP000009168">
    <property type="component" value="Unassembled WGS sequence"/>
</dbReference>
<dbReference type="GO" id="GO:0022625">
    <property type="term" value="C:cytosolic large ribosomal subunit"/>
    <property type="evidence" value="ECO:0007669"/>
    <property type="project" value="TreeGrafter"/>
</dbReference>
<dbReference type="GO" id="GO:0003735">
    <property type="term" value="F:structural constituent of ribosome"/>
    <property type="evidence" value="ECO:0007669"/>
    <property type="project" value="InterPro"/>
</dbReference>
<dbReference type="GO" id="GO:0006412">
    <property type="term" value="P:translation"/>
    <property type="evidence" value="ECO:0007669"/>
    <property type="project" value="InterPro"/>
</dbReference>
<dbReference type="CDD" id="cd00513">
    <property type="entry name" value="Ribosomal_L32_L32e"/>
    <property type="match status" value="1"/>
</dbReference>
<dbReference type="InterPro" id="IPR001515">
    <property type="entry name" value="Ribosomal_eL32"/>
</dbReference>
<dbReference type="InterPro" id="IPR036351">
    <property type="entry name" value="Ribosomal_eL32_sf"/>
</dbReference>
<dbReference type="PANTHER" id="PTHR23413">
    <property type="entry name" value="60S RIBOSOMAL PROTEIN L32 AND DNA-DIRECTED RNA POLYMERASE II, SUBUNIT N"/>
    <property type="match status" value="1"/>
</dbReference>
<dbReference type="PANTHER" id="PTHR23413:SF1">
    <property type="entry name" value="RIBOSOMAL PROTEIN L32"/>
    <property type="match status" value="1"/>
</dbReference>
<dbReference type="Pfam" id="PF01655">
    <property type="entry name" value="Ribosomal_L32e"/>
    <property type="match status" value="1"/>
</dbReference>
<dbReference type="SMART" id="SM01393">
    <property type="entry name" value="Ribosomal_L32e"/>
    <property type="match status" value="1"/>
</dbReference>
<dbReference type="SUPFAM" id="SSF52042">
    <property type="entry name" value="Ribosomal protein L32e"/>
    <property type="match status" value="1"/>
</dbReference>
<name>RL32_TETTS</name>
<feature type="chain" id="PRO_0000413516" description="Large ribosomal subunit protein eL32">
    <location>
        <begin position="1"/>
        <end position="134"/>
    </location>
</feature>
<gene>
    <name type="primary">RPL32</name>
    <name type="ORF">TTHERM_00085180</name>
</gene>
<keyword id="KW-0002">3D-structure</keyword>
<keyword id="KW-1185">Reference proteome</keyword>
<keyword id="KW-0687">Ribonucleoprotein</keyword>
<keyword id="KW-0689">Ribosomal protein</keyword>
<comment type="similarity">
    <text evidence="1">Belongs to the eukaryotic ribosomal protein eL32 family.</text>
</comment>
<comment type="sequence caution" evidence="1">
    <conflict type="erroneous initiation">
        <sequence resource="EMBL-CDS" id="EAR92420"/>
    </conflict>
    <text>Extended N-terminus.</text>
</comment>
<sequence length="134" mass="15312">MAIKPVAHKKIIKKRTKKFVRFESEDFAKLDSSWRRPRGIDNRVRRRFRGQRRMAKIGFASDAATKHLLPNGFKKFLIRNPADLEILLMNNRTYCGEIAHNISAQVKAALVKRAAELGVRLTNANAKVKVQESA</sequence>
<accession>Q236T0</accession>
<reference key="1">
    <citation type="journal article" date="2006" name="PLoS Biol.">
        <title>Macronuclear genome sequence of the ciliate Tetrahymena thermophila, a model eukaryote.</title>
        <authorList>
            <person name="Eisen J.A."/>
            <person name="Coyne R.S."/>
            <person name="Wu M."/>
            <person name="Wu D."/>
            <person name="Thiagarajan M."/>
            <person name="Wortman J.R."/>
            <person name="Badger J.H."/>
            <person name="Ren Q."/>
            <person name="Amedeo P."/>
            <person name="Jones K.M."/>
            <person name="Tallon L.J."/>
            <person name="Delcher A.L."/>
            <person name="Salzberg S.L."/>
            <person name="Silva J.C."/>
            <person name="Haas B.J."/>
            <person name="Majoros W.H."/>
            <person name="Farzad M."/>
            <person name="Carlton J.M."/>
            <person name="Smith R.K. Jr."/>
            <person name="Garg J."/>
            <person name="Pearlman R.E."/>
            <person name="Karrer K.M."/>
            <person name="Sun L."/>
            <person name="Manning G."/>
            <person name="Elde N.C."/>
            <person name="Turkewitz A.P."/>
            <person name="Asai D.J."/>
            <person name="Wilkes D.E."/>
            <person name="Wang Y."/>
            <person name="Cai H."/>
            <person name="Collins K."/>
            <person name="Stewart B.A."/>
            <person name="Lee S.R."/>
            <person name="Wilamowska K."/>
            <person name="Weinberg Z."/>
            <person name="Ruzzo W.L."/>
            <person name="Wloga D."/>
            <person name="Gaertig J."/>
            <person name="Frankel J."/>
            <person name="Tsao C.-C."/>
            <person name="Gorovsky M.A."/>
            <person name="Keeling P.J."/>
            <person name="Waller R.F."/>
            <person name="Patron N.J."/>
            <person name="Cherry J.M."/>
            <person name="Stover N.A."/>
            <person name="Krieger C.J."/>
            <person name="del Toro C."/>
            <person name="Ryder H.F."/>
            <person name="Williamson S.C."/>
            <person name="Barbeau R.A."/>
            <person name="Hamilton E.P."/>
            <person name="Orias E."/>
        </authorList>
    </citation>
    <scope>NUCLEOTIDE SEQUENCE [LARGE SCALE GENOMIC DNA]</scope>
    <source>
        <strain>SB210</strain>
    </source>
</reference>
<organism>
    <name type="scientific">Tetrahymena thermophila (strain SB210)</name>
    <dbReference type="NCBI Taxonomy" id="312017"/>
    <lineage>
        <taxon>Eukaryota</taxon>
        <taxon>Sar</taxon>
        <taxon>Alveolata</taxon>
        <taxon>Ciliophora</taxon>
        <taxon>Intramacronucleata</taxon>
        <taxon>Oligohymenophorea</taxon>
        <taxon>Hymenostomatida</taxon>
        <taxon>Tetrahymenina</taxon>
        <taxon>Tetrahymenidae</taxon>
        <taxon>Tetrahymena</taxon>
    </lineage>
</organism>